<protein>
    <recommendedName>
        <fullName evidence="1">Phenylalanine--tRNA ligase alpha subunit</fullName>
        <ecNumber evidence="1">6.1.1.20</ecNumber>
    </recommendedName>
    <alternativeName>
        <fullName evidence="1">Phenylalanyl-tRNA synthetase alpha subunit</fullName>
        <shortName evidence="1">PheRS</shortName>
    </alternativeName>
</protein>
<feature type="chain" id="PRO_1000071933" description="Phenylalanine--tRNA ligase alpha subunit">
    <location>
        <begin position="1"/>
        <end position="330"/>
    </location>
</feature>
<feature type="binding site" evidence="1">
    <location>
        <position position="246"/>
    </location>
    <ligand>
        <name>Mg(2+)</name>
        <dbReference type="ChEBI" id="CHEBI:18420"/>
        <note>shared with beta subunit</note>
    </ligand>
</feature>
<organism>
    <name type="scientific">Campylobacter jejuni subsp. jejuni serotype O:6 (strain 81116 / NCTC 11828)</name>
    <dbReference type="NCBI Taxonomy" id="407148"/>
    <lineage>
        <taxon>Bacteria</taxon>
        <taxon>Pseudomonadati</taxon>
        <taxon>Campylobacterota</taxon>
        <taxon>Epsilonproteobacteria</taxon>
        <taxon>Campylobacterales</taxon>
        <taxon>Campylobacteraceae</taxon>
        <taxon>Campylobacter</taxon>
    </lineage>
</organism>
<accession>A8FLU6</accession>
<sequence>MQNFIEQIQKCENLNDLEAIRISVLGKKGILTEGFTKLKELEDEAKKEFAAKLNAQKEIFNEAYLAKFKDLENLALEERMKQDALNFNYFDESITTGALHPVMSTMDKIIEYFIALNFSIEKGPLIEDDFHNFEALNLPKSHPARDMQDTFYFDDKRLLRTQTSPVQIRTMLAQKPPIRMIAPGAVFRRDFDITHTPMFHQVEGLVVEEGQKVSFANLKSVLEDFLRYMFGDVKVRFRPSFFPFTEPSAEVDISCVFCKGKGCRVCKHTGWLEVLGCGIVDPNVYNFVGYENVSGYAFGLGVERFAMLLHQIPDLRSLFEGDLRLLEQFR</sequence>
<gene>
    <name evidence="1" type="primary">pheS</name>
    <name type="ordered locus">C8J_0834</name>
</gene>
<evidence type="ECO:0000255" key="1">
    <source>
        <dbReference type="HAMAP-Rule" id="MF_00281"/>
    </source>
</evidence>
<keyword id="KW-0030">Aminoacyl-tRNA synthetase</keyword>
<keyword id="KW-0067">ATP-binding</keyword>
<keyword id="KW-0963">Cytoplasm</keyword>
<keyword id="KW-0436">Ligase</keyword>
<keyword id="KW-0460">Magnesium</keyword>
<keyword id="KW-0479">Metal-binding</keyword>
<keyword id="KW-0547">Nucleotide-binding</keyword>
<keyword id="KW-0648">Protein biosynthesis</keyword>
<proteinExistence type="inferred from homology"/>
<name>SYFA_CAMJ8</name>
<comment type="catalytic activity">
    <reaction evidence="1">
        <text>tRNA(Phe) + L-phenylalanine + ATP = L-phenylalanyl-tRNA(Phe) + AMP + diphosphate + H(+)</text>
        <dbReference type="Rhea" id="RHEA:19413"/>
        <dbReference type="Rhea" id="RHEA-COMP:9668"/>
        <dbReference type="Rhea" id="RHEA-COMP:9699"/>
        <dbReference type="ChEBI" id="CHEBI:15378"/>
        <dbReference type="ChEBI" id="CHEBI:30616"/>
        <dbReference type="ChEBI" id="CHEBI:33019"/>
        <dbReference type="ChEBI" id="CHEBI:58095"/>
        <dbReference type="ChEBI" id="CHEBI:78442"/>
        <dbReference type="ChEBI" id="CHEBI:78531"/>
        <dbReference type="ChEBI" id="CHEBI:456215"/>
        <dbReference type="EC" id="6.1.1.20"/>
    </reaction>
</comment>
<comment type="cofactor">
    <cofactor evidence="1">
        <name>Mg(2+)</name>
        <dbReference type="ChEBI" id="CHEBI:18420"/>
    </cofactor>
    <text evidence="1">Binds 2 magnesium ions per tetramer.</text>
</comment>
<comment type="subunit">
    <text evidence="1">Tetramer of two alpha and two beta subunits.</text>
</comment>
<comment type="subcellular location">
    <subcellularLocation>
        <location evidence="1">Cytoplasm</location>
    </subcellularLocation>
</comment>
<comment type="similarity">
    <text evidence="1">Belongs to the class-II aminoacyl-tRNA synthetase family. Phe-tRNA synthetase alpha subunit type 1 subfamily.</text>
</comment>
<dbReference type="EC" id="6.1.1.20" evidence="1"/>
<dbReference type="EMBL" id="CP000814">
    <property type="protein sequence ID" value="ABV52433.1"/>
    <property type="molecule type" value="Genomic_DNA"/>
</dbReference>
<dbReference type="RefSeq" id="WP_002852567.1">
    <property type="nucleotide sequence ID" value="NC_009839.1"/>
</dbReference>
<dbReference type="SMR" id="A8FLU6"/>
<dbReference type="KEGG" id="cju:C8J_0834"/>
<dbReference type="HOGENOM" id="CLU_025086_0_1_7"/>
<dbReference type="GO" id="GO:0005737">
    <property type="term" value="C:cytoplasm"/>
    <property type="evidence" value="ECO:0007669"/>
    <property type="project" value="UniProtKB-SubCell"/>
</dbReference>
<dbReference type="GO" id="GO:0005524">
    <property type="term" value="F:ATP binding"/>
    <property type="evidence" value="ECO:0007669"/>
    <property type="project" value="UniProtKB-UniRule"/>
</dbReference>
<dbReference type="GO" id="GO:0000287">
    <property type="term" value="F:magnesium ion binding"/>
    <property type="evidence" value="ECO:0007669"/>
    <property type="project" value="UniProtKB-UniRule"/>
</dbReference>
<dbReference type="GO" id="GO:0004826">
    <property type="term" value="F:phenylalanine-tRNA ligase activity"/>
    <property type="evidence" value="ECO:0007669"/>
    <property type="project" value="UniProtKB-UniRule"/>
</dbReference>
<dbReference type="GO" id="GO:0000049">
    <property type="term" value="F:tRNA binding"/>
    <property type="evidence" value="ECO:0007669"/>
    <property type="project" value="InterPro"/>
</dbReference>
<dbReference type="GO" id="GO:0006432">
    <property type="term" value="P:phenylalanyl-tRNA aminoacylation"/>
    <property type="evidence" value="ECO:0007669"/>
    <property type="project" value="UniProtKB-UniRule"/>
</dbReference>
<dbReference type="CDD" id="cd00496">
    <property type="entry name" value="PheRS_alpha_core"/>
    <property type="match status" value="1"/>
</dbReference>
<dbReference type="Gene3D" id="3.30.930.10">
    <property type="entry name" value="Bira Bifunctional Protein, Domain 2"/>
    <property type="match status" value="1"/>
</dbReference>
<dbReference type="HAMAP" id="MF_00281">
    <property type="entry name" value="Phe_tRNA_synth_alpha1"/>
    <property type="match status" value="1"/>
</dbReference>
<dbReference type="InterPro" id="IPR006195">
    <property type="entry name" value="aa-tRNA-synth_II"/>
</dbReference>
<dbReference type="InterPro" id="IPR045864">
    <property type="entry name" value="aa-tRNA-synth_II/BPL/LPL"/>
</dbReference>
<dbReference type="InterPro" id="IPR004529">
    <property type="entry name" value="Phe-tRNA-synth_IIc_asu"/>
</dbReference>
<dbReference type="InterPro" id="IPR004188">
    <property type="entry name" value="Phe-tRNA_ligase_II_N"/>
</dbReference>
<dbReference type="InterPro" id="IPR022911">
    <property type="entry name" value="Phe_tRNA_ligase_alpha1_bac"/>
</dbReference>
<dbReference type="InterPro" id="IPR002319">
    <property type="entry name" value="Phenylalanyl-tRNA_Synthase"/>
</dbReference>
<dbReference type="InterPro" id="IPR010978">
    <property type="entry name" value="tRNA-bd_arm"/>
</dbReference>
<dbReference type="NCBIfam" id="TIGR00468">
    <property type="entry name" value="pheS"/>
    <property type="match status" value="1"/>
</dbReference>
<dbReference type="PANTHER" id="PTHR11538:SF41">
    <property type="entry name" value="PHENYLALANINE--TRNA LIGASE, MITOCHONDRIAL"/>
    <property type="match status" value="1"/>
</dbReference>
<dbReference type="PANTHER" id="PTHR11538">
    <property type="entry name" value="PHENYLALANYL-TRNA SYNTHETASE"/>
    <property type="match status" value="1"/>
</dbReference>
<dbReference type="Pfam" id="PF02912">
    <property type="entry name" value="Phe_tRNA-synt_N"/>
    <property type="match status" value="1"/>
</dbReference>
<dbReference type="Pfam" id="PF01409">
    <property type="entry name" value="tRNA-synt_2d"/>
    <property type="match status" value="1"/>
</dbReference>
<dbReference type="SUPFAM" id="SSF55681">
    <property type="entry name" value="Class II aaRS and biotin synthetases"/>
    <property type="match status" value="1"/>
</dbReference>
<dbReference type="SUPFAM" id="SSF46589">
    <property type="entry name" value="tRNA-binding arm"/>
    <property type="match status" value="1"/>
</dbReference>
<dbReference type="PROSITE" id="PS50862">
    <property type="entry name" value="AA_TRNA_LIGASE_II"/>
    <property type="match status" value="1"/>
</dbReference>
<reference key="1">
    <citation type="journal article" date="2007" name="J. Bacteriol.">
        <title>The complete genome sequence of Campylobacter jejuni strain 81116 (NCTC11828).</title>
        <authorList>
            <person name="Pearson B.M."/>
            <person name="Gaskin D.J.H."/>
            <person name="Segers R.P.A.M."/>
            <person name="Wells J.M."/>
            <person name="Nuijten P.J.M."/>
            <person name="van Vliet A.H.M."/>
        </authorList>
    </citation>
    <scope>NUCLEOTIDE SEQUENCE [LARGE SCALE GENOMIC DNA]</scope>
    <source>
        <strain>81116 / NCTC 11828</strain>
    </source>
</reference>